<comment type="subcellular location">
    <subcellularLocation>
        <location evidence="1">Nucleus</location>
        <location evidence="1">Nucleolus</location>
    </subcellularLocation>
</comment>
<comment type="similarity">
    <text evidence="3">Belongs to the WD repeat WDR55 family.</text>
</comment>
<dbReference type="EMBL" id="DS027698">
    <property type="protein sequence ID" value="EAW15927.1"/>
    <property type="molecule type" value="Genomic_DNA"/>
</dbReference>
<dbReference type="RefSeq" id="XP_001257824.1">
    <property type="nucleotide sequence ID" value="XM_001257823.1"/>
</dbReference>
<dbReference type="SMR" id="A1DMA6"/>
<dbReference type="STRING" id="331117.A1DMA6"/>
<dbReference type="EnsemblFungi" id="EAW15927">
    <property type="protein sequence ID" value="EAW15927"/>
    <property type="gene ID" value="NFIA_052730"/>
</dbReference>
<dbReference type="GeneID" id="4584339"/>
<dbReference type="KEGG" id="nfi:NFIA_052730"/>
<dbReference type="VEuPathDB" id="FungiDB:NFIA_052730"/>
<dbReference type="eggNOG" id="KOG2444">
    <property type="taxonomic scope" value="Eukaryota"/>
</dbReference>
<dbReference type="HOGENOM" id="CLU_052691_0_0_1"/>
<dbReference type="OMA" id="QAIHPTE"/>
<dbReference type="OrthoDB" id="2288928at2759"/>
<dbReference type="Proteomes" id="UP000006702">
    <property type="component" value="Unassembled WGS sequence"/>
</dbReference>
<dbReference type="GO" id="GO:0005730">
    <property type="term" value="C:nucleolus"/>
    <property type="evidence" value="ECO:0007669"/>
    <property type="project" value="UniProtKB-SubCell"/>
</dbReference>
<dbReference type="Gene3D" id="2.130.10.10">
    <property type="entry name" value="YVTN repeat-like/Quinoprotein amine dehydrogenase"/>
    <property type="match status" value="1"/>
</dbReference>
<dbReference type="InterPro" id="IPR015943">
    <property type="entry name" value="WD40/YVTN_repeat-like_dom_sf"/>
</dbReference>
<dbReference type="InterPro" id="IPR036322">
    <property type="entry name" value="WD40_repeat_dom_sf"/>
</dbReference>
<dbReference type="InterPro" id="IPR050505">
    <property type="entry name" value="WDR55_POC1"/>
</dbReference>
<dbReference type="PANTHER" id="PTHR44019">
    <property type="entry name" value="WD REPEAT-CONTAINING PROTEIN 55"/>
    <property type="match status" value="1"/>
</dbReference>
<dbReference type="PANTHER" id="PTHR44019:SF20">
    <property type="entry name" value="WD REPEAT-CONTAINING PROTEIN 55"/>
    <property type="match status" value="1"/>
</dbReference>
<dbReference type="SUPFAM" id="SSF50978">
    <property type="entry name" value="WD40 repeat-like"/>
    <property type="match status" value="1"/>
</dbReference>
<reference key="1">
    <citation type="journal article" date="2008" name="PLoS Genet.">
        <title>Genomic islands in the pathogenic filamentous fungus Aspergillus fumigatus.</title>
        <authorList>
            <person name="Fedorova N.D."/>
            <person name="Khaldi N."/>
            <person name="Joardar V.S."/>
            <person name="Maiti R."/>
            <person name="Amedeo P."/>
            <person name="Anderson M.J."/>
            <person name="Crabtree J."/>
            <person name="Silva J.C."/>
            <person name="Badger J.H."/>
            <person name="Albarraq A."/>
            <person name="Angiuoli S."/>
            <person name="Bussey H."/>
            <person name="Bowyer P."/>
            <person name="Cotty P.J."/>
            <person name="Dyer P.S."/>
            <person name="Egan A."/>
            <person name="Galens K."/>
            <person name="Fraser-Liggett C.M."/>
            <person name="Haas B.J."/>
            <person name="Inman J.M."/>
            <person name="Kent R."/>
            <person name="Lemieux S."/>
            <person name="Malavazi I."/>
            <person name="Orvis J."/>
            <person name="Roemer T."/>
            <person name="Ronning C.M."/>
            <person name="Sundaram J.P."/>
            <person name="Sutton G."/>
            <person name="Turner G."/>
            <person name="Venter J.C."/>
            <person name="White O.R."/>
            <person name="Whitty B.R."/>
            <person name="Youngman P."/>
            <person name="Wolfe K.H."/>
            <person name="Goldman G.H."/>
            <person name="Wortman J.R."/>
            <person name="Jiang B."/>
            <person name="Denning D.W."/>
            <person name="Nierman W.C."/>
        </authorList>
    </citation>
    <scope>NUCLEOTIDE SEQUENCE [LARGE SCALE GENOMIC DNA]</scope>
    <source>
        <strain>ATCC 1020 / DSM 3700 / CBS 544.65 / FGSC A1164 / JCM 1740 / NRRL 181 / WB 181</strain>
    </source>
</reference>
<gene>
    <name type="primary">jip5</name>
    <name type="ORF">NFIA_052730</name>
</gene>
<accession>A1DMA6</accession>
<protein>
    <recommendedName>
        <fullName>WD repeat-containing protein jip5</fullName>
    </recommendedName>
</protein>
<name>JIP5_NEOFI</name>
<feature type="chain" id="PRO_0000333565" description="WD repeat-containing protein jip5">
    <location>
        <begin position="1"/>
        <end position="414"/>
    </location>
</feature>
<feature type="repeat" description="WD 1">
    <location>
        <begin position="9"/>
        <end position="48"/>
    </location>
</feature>
<feature type="repeat" description="WD 2">
    <location>
        <begin position="73"/>
        <end position="112"/>
    </location>
</feature>
<feature type="repeat" description="WD 3">
    <location>
        <begin position="118"/>
        <end position="159"/>
    </location>
</feature>
<feature type="repeat" description="WD 4">
    <location>
        <begin position="222"/>
        <end position="263"/>
    </location>
</feature>
<feature type="repeat" description="WD 5">
    <location>
        <begin position="319"/>
        <end position="356"/>
    </location>
</feature>
<feature type="region of interest" description="Disordered" evidence="2">
    <location>
        <begin position="39"/>
        <end position="65"/>
    </location>
</feature>
<feature type="region of interest" description="Disordered" evidence="2">
    <location>
        <begin position="352"/>
        <end position="414"/>
    </location>
</feature>
<feature type="compositionally biased region" description="Acidic residues" evidence="2">
    <location>
        <begin position="369"/>
        <end position="383"/>
    </location>
</feature>
<evidence type="ECO:0000250" key="1"/>
<evidence type="ECO:0000256" key="2">
    <source>
        <dbReference type="SAM" id="MobiDB-lite"/>
    </source>
</evidence>
<evidence type="ECO:0000305" key="3"/>
<keyword id="KW-0539">Nucleus</keyword>
<keyword id="KW-1185">Reference proteome</keyword>
<keyword id="KW-0677">Repeat</keyword>
<keyword id="KW-0853">WD repeat</keyword>
<proteinExistence type="inferred from homology"/>
<organism>
    <name type="scientific">Neosartorya fischeri (strain ATCC 1020 / DSM 3700 / CBS 544.65 / FGSC A1164 / JCM 1740 / NRRL 181 / WB 181)</name>
    <name type="common">Aspergillus fischerianus</name>
    <dbReference type="NCBI Taxonomy" id="331117"/>
    <lineage>
        <taxon>Eukaryota</taxon>
        <taxon>Fungi</taxon>
        <taxon>Dikarya</taxon>
        <taxon>Ascomycota</taxon>
        <taxon>Pezizomycotina</taxon>
        <taxon>Eurotiomycetes</taxon>
        <taxon>Eurotiomycetidae</taxon>
        <taxon>Eurotiales</taxon>
        <taxon>Aspergillaceae</taxon>
        <taxon>Aspergillus</taxon>
        <taxon>Aspergillus subgen. Fumigati</taxon>
    </lineage>
</organism>
<sequence length="414" mass="43953">MFDTVCTLPLSADLFSQALHPKEPIVSVGLSTGHVQTFRLPSEESDTDGDGAESTSSSRNGKGHIDTMWRTRRHKGSCRCLGFGVDGEMLYSAGTDGLVKAAKAETGVVENKIAIPPAKDGSVDAPTIVHALSPQTLLLATDSSALHLYDLRIPFSPVSARPQQTHHPHDDYISSLTPLPPSDTSTSGFSKQWVTTGGTTLAVTDLRRGVLVRSEDQEEELVSSVYIGGLRASGTSRGEKVVVGGSSGVLTLWEKGAWDDQDERIYVQREAGGGESLETLAVVPDELGKGKMIAVGLGSGGVKFVRMGMNKVVSEVMHDETEGVIGLGFDVEGRMVSGGGQVVKVWHEAVDSDGMDGDMAGGKRMFGSDSDDSDDGDDSDDSDRESRKAAQPQRKKKKNKGKGGQDIMGFADID</sequence>